<feature type="chain" id="PRO_0000300464" description="Kelch domain-containing protein 9">
    <location>
        <begin position="1"/>
        <end position="349"/>
    </location>
</feature>
<feature type="repeat" description="Kelch 1">
    <location>
        <begin position="39"/>
        <end position="89"/>
    </location>
</feature>
<feature type="repeat" description="Kelch 2">
    <location>
        <begin position="91"/>
        <end position="137"/>
    </location>
</feature>
<feature type="repeat" description="Kelch 3">
    <location>
        <begin position="325"/>
        <end position="349"/>
    </location>
</feature>
<feature type="splice variant" id="VSP_027807" description="In isoform 3." evidence="3 5">
    <original>CYKQEGCHTASRSGHCAALLQTPGPHPGHQLLLFGGCNLAEPEVAGHWSHGKIKEEPPVAPHLMEQLARLVSSGQGSQKGPHGLRHHS</original>
    <variation>WYGTLRPKPFTLIHTLEKQKPKQISQAIYPPPHSSTLLPGEPTMFKLAELSTVLPSLLSHLPHCPMPLLHPSLARAVALTFSRKPTQP</variation>
    <location>
        <begin position="176"/>
        <end position="263"/>
    </location>
</feature>
<feature type="splice variant" id="VSP_027808" description="In isoform 2." evidence="4">
    <original>EEPPVAPHLMEQLARLVSSGQGSQKGPHGLRHHSCSVVGPFAVLFGGETLTRARDTICN</original>
    <variation>SFLSPQGGTTCCSSFDGTACKACEQWAGVPEGAPWTTASLMFCGRALCCAVWWRNSDQS</variation>
    <location>
        <begin position="230"/>
        <end position="288"/>
    </location>
</feature>
<feature type="splice variant" id="VSP_027809" description="In isoform 3." evidence="3 5">
    <location>
        <begin position="264"/>
        <end position="349"/>
    </location>
</feature>
<feature type="splice variant" id="VSP_027810" description="In isoform 2." evidence="4">
    <location>
        <begin position="289"/>
        <end position="349"/>
    </location>
</feature>
<feature type="sequence variant" id="VAR_034873" description="In dbSNP:rs11576830.">
    <original>S</original>
    <variation>R</variation>
    <location>
        <position position="171"/>
    </location>
</feature>
<feature type="sequence variant" id="VAR_050056" description="In dbSNP:rs1128750." evidence="2">
    <original>A</original>
    <variation>T</variation>
    <location>
        <position position="282"/>
    </location>
</feature>
<feature type="sequence variant" id="VAR_034874" description="In dbSNP:rs1128750.">
    <original>N</original>
    <variation>S</variation>
    <location>
        <position position="288"/>
    </location>
</feature>
<feature type="sequence conflict" description="In Ref. 2; BAC04114." evidence="6" ref="2">
    <original>D</original>
    <variation>G</variation>
    <location>
        <position position="83"/>
    </location>
</feature>
<dbReference type="EMBL" id="AY601914">
    <property type="protein sequence ID" value="AAT09158.1"/>
    <property type="molecule type" value="mRNA"/>
</dbReference>
<dbReference type="EMBL" id="AK093268">
    <property type="protein sequence ID" value="BAC04114.1"/>
    <property type="molecule type" value="mRNA"/>
</dbReference>
<dbReference type="EMBL" id="AL591806">
    <property type="status" value="NOT_ANNOTATED_CDS"/>
    <property type="molecule type" value="Genomic_DNA"/>
</dbReference>
<dbReference type="EMBL" id="CH471121">
    <property type="protein sequence ID" value="EAW52659.1"/>
    <property type="molecule type" value="Genomic_DNA"/>
</dbReference>
<dbReference type="EMBL" id="CH471121">
    <property type="protein sequence ID" value="EAW52662.1"/>
    <property type="molecule type" value="Genomic_DNA"/>
</dbReference>
<dbReference type="EMBL" id="BC022077">
    <property type="protein sequence ID" value="AAH22077.2"/>
    <property type="molecule type" value="mRNA"/>
</dbReference>
<dbReference type="EMBL" id="BC032482">
    <property type="protein sequence ID" value="AAH32482.1"/>
    <property type="molecule type" value="mRNA"/>
</dbReference>
<dbReference type="EMBL" id="BC066896">
    <property type="protein sequence ID" value="AAH66896.1"/>
    <property type="molecule type" value="mRNA"/>
</dbReference>
<dbReference type="CCDS" id="CCDS30919.1">
    <molecule id="Q8NEP7-1"/>
</dbReference>
<dbReference type="CCDS" id="CCDS41425.1">
    <molecule id="Q8NEP7-2"/>
</dbReference>
<dbReference type="RefSeq" id="NP_001007256.1">
    <molecule id="Q8NEP7-2"/>
    <property type="nucleotide sequence ID" value="NM_001007255.3"/>
</dbReference>
<dbReference type="RefSeq" id="NP_689579.3">
    <molecule id="Q8NEP7-1"/>
    <property type="nucleotide sequence ID" value="NM_152366.4"/>
</dbReference>
<dbReference type="SMR" id="Q8NEP7"/>
<dbReference type="BioGRID" id="126019">
    <property type="interactions" value="37"/>
</dbReference>
<dbReference type="FunCoup" id="Q8NEP7">
    <property type="interactions" value="8"/>
</dbReference>
<dbReference type="IntAct" id="Q8NEP7">
    <property type="interactions" value="7"/>
</dbReference>
<dbReference type="STRING" id="9606.ENSP00000356990"/>
<dbReference type="iPTMnet" id="Q8NEP7"/>
<dbReference type="PhosphoSitePlus" id="Q8NEP7"/>
<dbReference type="BioMuta" id="KLHDC9"/>
<dbReference type="DMDM" id="74751256"/>
<dbReference type="MassIVE" id="Q8NEP7"/>
<dbReference type="PaxDb" id="9606-ENSP00000356990"/>
<dbReference type="PeptideAtlas" id="Q8NEP7"/>
<dbReference type="ProteomicsDB" id="73194">
    <molecule id="Q8NEP7-1"/>
</dbReference>
<dbReference type="ProteomicsDB" id="73195">
    <molecule id="Q8NEP7-2"/>
</dbReference>
<dbReference type="ProteomicsDB" id="73196">
    <molecule id="Q8NEP7-3"/>
</dbReference>
<dbReference type="Antibodypedia" id="34288">
    <property type="antibodies" value="73 antibodies from 15 providers"/>
</dbReference>
<dbReference type="DNASU" id="126823"/>
<dbReference type="Ensembl" id="ENST00000368011.9">
    <molecule id="Q8NEP7-1"/>
    <property type="protein sequence ID" value="ENSP00000356990.4"/>
    <property type="gene ID" value="ENSG00000162755.14"/>
</dbReference>
<dbReference type="Ensembl" id="ENST00000392192.6">
    <molecule id="Q8NEP7-2"/>
    <property type="protein sequence ID" value="ENSP00000376030.2"/>
    <property type="gene ID" value="ENSG00000162755.14"/>
</dbReference>
<dbReference type="GeneID" id="126823"/>
<dbReference type="KEGG" id="hsa:126823"/>
<dbReference type="MANE-Select" id="ENST00000368011.9">
    <property type="protein sequence ID" value="ENSP00000356990.4"/>
    <property type="RefSeq nucleotide sequence ID" value="NM_152366.5"/>
    <property type="RefSeq protein sequence ID" value="NP_689579.3"/>
</dbReference>
<dbReference type="UCSC" id="uc001fxr.4">
    <molecule id="Q8NEP7-1"/>
    <property type="organism name" value="human"/>
</dbReference>
<dbReference type="AGR" id="HGNC:28489"/>
<dbReference type="CTD" id="126823"/>
<dbReference type="DisGeNET" id="126823"/>
<dbReference type="GeneCards" id="KLHDC9"/>
<dbReference type="HGNC" id="HGNC:28489">
    <property type="gene designation" value="KLHDC9"/>
</dbReference>
<dbReference type="HPA" id="ENSG00000162755">
    <property type="expression patterns" value="Tissue enhanced (testis)"/>
</dbReference>
<dbReference type="MIM" id="617375">
    <property type="type" value="gene"/>
</dbReference>
<dbReference type="neXtProt" id="NX_Q8NEP7"/>
<dbReference type="OpenTargets" id="ENSG00000162755"/>
<dbReference type="PharmGKB" id="PA162393459"/>
<dbReference type="VEuPathDB" id="HostDB:ENSG00000162755"/>
<dbReference type="eggNOG" id="KOG0379">
    <property type="taxonomic scope" value="Eukaryota"/>
</dbReference>
<dbReference type="GeneTree" id="ENSGT00390000011582"/>
<dbReference type="HOGENOM" id="CLU_068365_0_0_1"/>
<dbReference type="InParanoid" id="Q8NEP7"/>
<dbReference type="OMA" id="PEVAGQW"/>
<dbReference type="OrthoDB" id="10251809at2759"/>
<dbReference type="PAN-GO" id="Q8NEP7">
    <property type="GO annotations" value="1 GO annotation based on evolutionary models"/>
</dbReference>
<dbReference type="PhylomeDB" id="Q8NEP7"/>
<dbReference type="TreeFam" id="TF337916"/>
<dbReference type="PathwayCommons" id="Q8NEP7"/>
<dbReference type="SignaLink" id="Q8NEP7"/>
<dbReference type="BioGRID-ORCS" id="126823">
    <property type="hits" value="12 hits in 1137 CRISPR screens"/>
</dbReference>
<dbReference type="ChiTaRS" id="KLHDC9">
    <property type="organism name" value="human"/>
</dbReference>
<dbReference type="GenomeRNAi" id="126823"/>
<dbReference type="Pharos" id="Q8NEP7">
    <property type="development level" value="Tbio"/>
</dbReference>
<dbReference type="PRO" id="PR:Q8NEP7"/>
<dbReference type="Proteomes" id="UP000005640">
    <property type="component" value="Chromosome 1"/>
</dbReference>
<dbReference type="RNAct" id="Q8NEP7">
    <property type="molecule type" value="protein"/>
</dbReference>
<dbReference type="Bgee" id="ENSG00000162755">
    <property type="expression patterns" value="Expressed in right testis and 146 other cell types or tissues"/>
</dbReference>
<dbReference type="GO" id="GO:0030332">
    <property type="term" value="F:cyclin binding"/>
    <property type="evidence" value="ECO:0000353"/>
    <property type="project" value="UniProtKB"/>
</dbReference>
<dbReference type="FunFam" id="2.120.10.80:FF:000125">
    <property type="entry name" value="kelch domain-containing protein 9"/>
    <property type="match status" value="1"/>
</dbReference>
<dbReference type="Gene3D" id="2.120.10.80">
    <property type="entry name" value="Kelch-type beta propeller"/>
    <property type="match status" value="2"/>
</dbReference>
<dbReference type="InterPro" id="IPR011043">
    <property type="entry name" value="Gal_Oxase/kelch_b-propeller"/>
</dbReference>
<dbReference type="InterPro" id="IPR015915">
    <property type="entry name" value="Kelch-typ_b-propeller"/>
</dbReference>
<dbReference type="InterPro" id="IPR042941">
    <property type="entry name" value="KLDC9"/>
</dbReference>
<dbReference type="PANTHER" id="PTHR47196">
    <property type="entry name" value="KELCH DOMAIN-CONTAINING PROTEIN 9"/>
    <property type="match status" value="1"/>
</dbReference>
<dbReference type="PANTHER" id="PTHR47196:SF1">
    <property type="entry name" value="KELCH DOMAIN-CONTAINING PROTEIN 9"/>
    <property type="match status" value="1"/>
</dbReference>
<dbReference type="Pfam" id="PF24681">
    <property type="entry name" value="Kelch_KLHDC2_KLHL20_DRC7"/>
    <property type="match status" value="1"/>
</dbReference>
<dbReference type="SUPFAM" id="SSF50965">
    <property type="entry name" value="Galactose oxidase, central domain"/>
    <property type="match status" value="1"/>
</dbReference>
<reference key="1">
    <citation type="journal article" date="2004" name="J. Biol. Chem.">
        <title>Identification of interaction partners and substrates of the cyclin A1-CDK2 complex.</title>
        <authorList>
            <person name="Diederichs S."/>
            <person name="Baeumer N."/>
            <person name="Ji P."/>
            <person name="Metzelder S.K."/>
            <person name="Idos G.E."/>
            <person name="Cauvet T."/>
            <person name="Wang W."/>
            <person name="Moeller M."/>
            <person name="Pierschalski S."/>
            <person name="Gromoll J."/>
            <person name="Schrader M.G."/>
            <person name="Koeffler H.P."/>
            <person name="Berdel W.E."/>
            <person name="Serve H."/>
            <person name="Mueller-Tidow C."/>
        </authorList>
    </citation>
    <scope>NUCLEOTIDE SEQUENCE [MRNA] (ISOFORM 2)</scope>
    <scope>INTERACTION WITH CCNA1</scope>
</reference>
<reference key="2">
    <citation type="journal article" date="2004" name="Nat. Genet.">
        <title>Complete sequencing and characterization of 21,243 full-length human cDNAs.</title>
        <authorList>
            <person name="Ota T."/>
            <person name="Suzuki Y."/>
            <person name="Nishikawa T."/>
            <person name="Otsuki T."/>
            <person name="Sugiyama T."/>
            <person name="Irie R."/>
            <person name="Wakamatsu A."/>
            <person name="Hayashi K."/>
            <person name="Sato H."/>
            <person name="Nagai K."/>
            <person name="Kimura K."/>
            <person name="Makita H."/>
            <person name="Sekine M."/>
            <person name="Obayashi M."/>
            <person name="Nishi T."/>
            <person name="Shibahara T."/>
            <person name="Tanaka T."/>
            <person name="Ishii S."/>
            <person name="Yamamoto J."/>
            <person name="Saito K."/>
            <person name="Kawai Y."/>
            <person name="Isono Y."/>
            <person name="Nakamura Y."/>
            <person name="Nagahari K."/>
            <person name="Murakami K."/>
            <person name="Yasuda T."/>
            <person name="Iwayanagi T."/>
            <person name="Wagatsuma M."/>
            <person name="Shiratori A."/>
            <person name="Sudo H."/>
            <person name="Hosoiri T."/>
            <person name="Kaku Y."/>
            <person name="Kodaira H."/>
            <person name="Kondo H."/>
            <person name="Sugawara M."/>
            <person name="Takahashi M."/>
            <person name="Kanda K."/>
            <person name="Yokoi T."/>
            <person name="Furuya T."/>
            <person name="Kikkawa E."/>
            <person name="Omura Y."/>
            <person name="Abe K."/>
            <person name="Kamihara K."/>
            <person name="Katsuta N."/>
            <person name="Sato K."/>
            <person name="Tanikawa M."/>
            <person name="Yamazaki M."/>
            <person name="Ninomiya K."/>
            <person name="Ishibashi T."/>
            <person name="Yamashita H."/>
            <person name="Murakawa K."/>
            <person name="Fujimori K."/>
            <person name="Tanai H."/>
            <person name="Kimata M."/>
            <person name="Watanabe M."/>
            <person name="Hiraoka S."/>
            <person name="Chiba Y."/>
            <person name="Ishida S."/>
            <person name="Ono Y."/>
            <person name="Takiguchi S."/>
            <person name="Watanabe S."/>
            <person name="Yosida M."/>
            <person name="Hotuta T."/>
            <person name="Kusano J."/>
            <person name="Kanehori K."/>
            <person name="Takahashi-Fujii A."/>
            <person name="Hara H."/>
            <person name="Tanase T.-O."/>
            <person name="Nomura Y."/>
            <person name="Togiya S."/>
            <person name="Komai F."/>
            <person name="Hara R."/>
            <person name="Takeuchi K."/>
            <person name="Arita M."/>
            <person name="Imose N."/>
            <person name="Musashino K."/>
            <person name="Yuuki H."/>
            <person name="Oshima A."/>
            <person name="Sasaki N."/>
            <person name="Aotsuka S."/>
            <person name="Yoshikawa Y."/>
            <person name="Matsunawa H."/>
            <person name="Ichihara T."/>
            <person name="Shiohata N."/>
            <person name="Sano S."/>
            <person name="Moriya S."/>
            <person name="Momiyama H."/>
            <person name="Satoh N."/>
            <person name="Takami S."/>
            <person name="Terashima Y."/>
            <person name="Suzuki O."/>
            <person name="Nakagawa S."/>
            <person name="Senoh A."/>
            <person name="Mizoguchi H."/>
            <person name="Goto Y."/>
            <person name="Shimizu F."/>
            <person name="Wakebe H."/>
            <person name="Hishigaki H."/>
            <person name="Watanabe T."/>
            <person name="Sugiyama A."/>
            <person name="Takemoto M."/>
            <person name="Kawakami B."/>
            <person name="Yamazaki M."/>
            <person name="Watanabe K."/>
            <person name="Kumagai A."/>
            <person name="Itakura S."/>
            <person name="Fukuzumi Y."/>
            <person name="Fujimori Y."/>
            <person name="Komiyama M."/>
            <person name="Tashiro H."/>
            <person name="Tanigami A."/>
            <person name="Fujiwara T."/>
            <person name="Ono T."/>
            <person name="Yamada K."/>
            <person name="Fujii Y."/>
            <person name="Ozaki K."/>
            <person name="Hirao M."/>
            <person name="Ohmori Y."/>
            <person name="Kawabata A."/>
            <person name="Hikiji T."/>
            <person name="Kobatake N."/>
            <person name="Inagaki H."/>
            <person name="Ikema Y."/>
            <person name="Okamoto S."/>
            <person name="Okitani R."/>
            <person name="Kawakami T."/>
            <person name="Noguchi S."/>
            <person name="Itoh T."/>
            <person name="Shigeta K."/>
            <person name="Senba T."/>
            <person name="Matsumura K."/>
            <person name="Nakajima Y."/>
            <person name="Mizuno T."/>
            <person name="Morinaga M."/>
            <person name="Sasaki M."/>
            <person name="Togashi T."/>
            <person name="Oyama M."/>
            <person name="Hata H."/>
            <person name="Watanabe M."/>
            <person name="Komatsu T."/>
            <person name="Mizushima-Sugano J."/>
            <person name="Satoh T."/>
            <person name="Shirai Y."/>
            <person name="Takahashi Y."/>
            <person name="Nakagawa K."/>
            <person name="Okumura K."/>
            <person name="Nagase T."/>
            <person name="Nomura N."/>
            <person name="Kikuchi H."/>
            <person name="Masuho Y."/>
            <person name="Yamashita R."/>
            <person name="Nakai K."/>
            <person name="Yada T."/>
            <person name="Nakamura Y."/>
            <person name="Ohara O."/>
            <person name="Isogai T."/>
            <person name="Sugano S."/>
        </authorList>
    </citation>
    <scope>NUCLEOTIDE SEQUENCE [LARGE SCALE MRNA] (ISOFORM 3)</scope>
    <source>
        <tissue>Testis</tissue>
    </source>
</reference>
<reference key="3">
    <citation type="journal article" date="2006" name="Nature">
        <title>The DNA sequence and biological annotation of human chromosome 1.</title>
        <authorList>
            <person name="Gregory S.G."/>
            <person name="Barlow K.F."/>
            <person name="McLay K.E."/>
            <person name="Kaul R."/>
            <person name="Swarbreck D."/>
            <person name="Dunham A."/>
            <person name="Scott C.E."/>
            <person name="Howe K.L."/>
            <person name="Woodfine K."/>
            <person name="Spencer C.C.A."/>
            <person name="Jones M.C."/>
            <person name="Gillson C."/>
            <person name="Searle S."/>
            <person name="Zhou Y."/>
            <person name="Kokocinski F."/>
            <person name="McDonald L."/>
            <person name="Evans R."/>
            <person name="Phillips K."/>
            <person name="Atkinson A."/>
            <person name="Cooper R."/>
            <person name="Jones C."/>
            <person name="Hall R.E."/>
            <person name="Andrews T.D."/>
            <person name="Lloyd C."/>
            <person name="Ainscough R."/>
            <person name="Almeida J.P."/>
            <person name="Ambrose K.D."/>
            <person name="Anderson F."/>
            <person name="Andrew R.W."/>
            <person name="Ashwell R.I.S."/>
            <person name="Aubin K."/>
            <person name="Babbage A.K."/>
            <person name="Bagguley C.L."/>
            <person name="Bailey J."/>
            <person name="Beasley H."/>
            <person name="Bethel G."/>
            <person name="Bird C.P."/>
            <person name="Bray-Allen S."/>
            <person name="Brown J.Y."/>
            <person name="Brown A.J."/>
            <person name="Buckley D."/>
            <person name="Burton J."/>
            <person name="Bye J."/>
            <person name="Carder C."/>
            <person name="Chapman J.C."/>
            <person name="Clark S.Y."/>
            <person name="Clarke G."/>
            <person name="Clee C."/>
            <person name="Cobley V."/>
            <person name="Collier R.E."/>
            <person name="Corby N."/>
            <person name="Coville G.J."/>
            <person name="Davies J."/>
            <person name="Deadman R."/>
            <person name="Dunn M."/>
            <person name="Earthrowl M."/>
            <person name="Ellington A.G."/>
            <person name="Errington H."/>
            <person name="Frankish A."/>
            <person name="Frankland J."/>
            <person name="French L."/>
            <person name="Garner P."/>
            <person name="Garnett J."/>
            <person name="Gay L."/>
            <person name="Ghori M.R.J."/>
            <person name="Gibson R."/>
            <person name="Gilby L.M."/>
            <person name="Gillett W."/>
            <person name="Glithero R.J."/>
            <person name="Grafham D.V."/>
            <person name="Griffiths C."/>
            <person name="Griffiths-Jones S."/>
            <person name="Grocock R."/>
            <person name="Hammond S."/>
            <person name="Harrison E.S.I."/>
            <person name="Hart E."/>
            <person name="Haugen E."/>
            <person name="Heath P.D."/>
            <person name="Holmes S."/>
            <person name="Holt K."/>
            <person name="Howden P.J."/>
            <person name="Hunt A.R."/>
            <person name="Hunt S.E."/>
            <person name="Hunter G."/>
            <person name="Isherwood J."/>
            <person name="James R."/>
            <person name="Johnson C."/>
            <person name="Johnson D."/>
            <person name="Joy A."/>
            <person name="Kay M."/>
            <person name="Kershaw J.K."/>
            <person name="Kibukawa M."/>
            <person name="Kimberley A.M."/>
            <person name="King A."/>
            <person name="Knights A.J."/>
            <person name="Lad H."/>
            <person name="Laird G."/>
            <person name="Lawlor S."/>
            <person name="Leongamornlert D.A."/>
            <person name="Lloyd D.M."/>
            <person name="Loveland J."/>
            <person name="Lovell J."/>
            <person name="Lush M.J."/>
            <person name="Lyne R."/>
            <person name="Martin S."/>
            <person name="Mashreghi-Mohammadi M."/>
            <person name="Matthews L."/>
            <person name="Matthews N.S.W."/>
            <person name="McLaren S."/>
            <person name="Milne S."/>
            <person name="Mistry S."/>
            <person name="Moore M.J.F."/>
            <person name="Nickerson T."/>
            <person name="O'Dell C.N."/>
            <person name="Oliver K."/>
            <person name="Palmeiri A."/>
            <person name="Palmer S.A."/>
            <person name="Parker A."/>
            <person name="Patel D."/>
            <person name="Pearce A.V."/>
            <person name="Peck A.I."/>
            <person name="Pelan S."/>
            <person name="Phelps K."/>
            <person name="Phillimore B.J."/>
            <person name="Plumb R."/>
            <person name="Rajan J."/>
            <person name="Raymond C."/>
            <person name="Rouse G."/>
            <person name="Saenphimmachak C."/>
            <person name="Sehra H.K."/>
            <person name="Sheridan E."/>
            <person name="Shownkeen R."/>
            <person name="Sims S."/>
            <person name="Skuce C.D."/>
            <person name="Smith M."/>
            <person name="Steward C."/>
            <person name="Subramanian S."/>
            <person name="Sycamore N."/>
            <person name="Tracey A."/>
            <person name="Tromans A."/>
            <person name="Van Helmond Z."/>
            <person name="Wall M."/>
            <person name="Wallis J.M."/>
            <person name="White S."/>
            <person name="Whitehead S.L."/>
            <person name="Wilkinson J.E."/>
            <person name="Willey D.L."/>
            <person name="Williams H."/>
            <person name="Wilming L."/>
            <person name="Wray P.W."/>
            <person name="Wu Z."/>
            <person name="Coulson A."/>
            <person name="Vaudin M."/>
            <person name="Sulston J.E."/>
            <person name="Durbin R.M."/>
            <person name="Hubbard T."/>
            <person name="Wooster R."/>
            <person name="Dunham I."/>
            <person name="Carter N.P."/>
            <person name="McVean G."/>
            <person name="Ross M.T."/>
            <person name="Harrow J."/>
            <person name="Olson M.V."/>
            <person name="Beck S."/>
            <person name="Rogers J."/>
            <person name="Bentley D.R."/>
        </authorList>
    </citation>
    <scope>NUCLEOTIDE SEQUENCE [LARGE SCALE GENOMIC DNA]</scope>
</reference>
<reference key="4">
    <citation type="submission" date="2005-09" db="EMBL/GenBank/DDBJ databases">
        <authorList>
            <person name="Mural R.J."/>
            <person name="Istrail S."/>
            <person name="Sutton G.G."/>
            <person name="Florea L."/>
            <person name="Halpern A.L."/>
            <person name="Mobarry C.M."/>
            <person name="Lippert R."/>
            <person name="Walenz B."/>
            <person name="Shatkay H."/>
            <person name="Dew I."/>
            <person name="Miller J.R."/>
            <person name="Flanigan M.J."/>
            <person name="Edwards N.J."/>
            <person name="Bolanos R."/>
            <person name="Fasulo D."/>
            <person name="Halldorsson B.V."/>
            <person name="Hannenhalli S."/>
            <person name="Turner R."/>
            <person name="Yooseph S."/>
            <person name="Lu F."/>
            <person name="Nusskern D.R."/>
            <person name="Shue B.C."/>
            <person name="Zheng X.H."/>
            <person name="Zhong F."/>
            <person name="Delcher A.L."/>
            <person name="Huson D.H."/>
            <person name="Kravitz S.A."/>
            <person name="Mouchard L."/>
            <person name="Reinert K."/>
            <person name="Remington K.A."/>
            <person name="Clark A.G."/>
            <person name="Waterman M.S."/>
            <person name="Eichler E.E."/>
            <person name="Adams M.D."/>
            <person name="Hunkapiller M.W."/>
            <person name="Myers E.W."/>
            <person name="Venter J.C."/>
        </authorList>
    </citation>
    <scope>NUCLEOTIDE SEQUENCE [LARGE SCALE GENOMIC DNA]</scope>
</reference>
<reference key="5">
    <citation type="journal article" date="2004" name="Genome Res.">
        <title>The status, quality, and expansion of the NIH full-length cDNA project: the Mammalian Gene Collection (MGC).</title>
        <authorList>
            <consortium name="The MGC Project Team"/>
        </authorList>
    </citation>
    <scope>NUCLEOTIDE SEQUENCE [LARGE SCALE MRNA] (ISOFORMS 1 AND 3)</scope>
    <scope>VARIANT THR-282</scope>
    <source>
        <tissue>Pancreas</tissue>
        <tissue>Testis</tissue>
    </source>
</reference>
<accession>Q8NEP7</accession>
<accession>Q5SY56</accession>
<accession>Q6NXT9</accession>
<accession>Q6PKN4</accession>
<accession>Q8N5E1</accession>
<accession>Q8NA16</accession>
<evidence type="ECO:0000269" key="1">
    <source>
    </source>
</evidence>
<evidence type="ECO:0000269" key="2">
    <source>
    </source>
</evidence>
<evidence type="ECO:0000303" key="3">
    <source>
    </source>
</evidence>
<evidence type="ECO:0000303" key="4">
    <source>
    </source>
</evidence>
<evidence type="ECO:0000303" key="5">
    <source>
    </source>
</evidence>
<evidence type="ECO:0000305" key="6"/>
<keyword id="KW-0025">Alternative splicing</keyword>
<keyword id="KW-0880">Kelch repeat</keyword>
<keyword id="KW-1267">Proteomics identification</keyword>
<keyword id="KW-1185">Reference proteome</keyword>
<keyword id="KW-0677">Repeat</keyword>
<gene>
    <name type="primary">KLHDC9</name>
    <name type="synonym">KARCA1</name>
</gene>
<name>KLDC9_HUMAN</name>
<comment type="subunit">
    <text evidence="1">Interacts with CCNA1.</text>
</comment>
<comment type="interaction">
    <interactant intactId="EBI-12214879">
        <id>Q8NEP7</id>
    </interactant>
    <interactant intactId="EBI-374781">
        <id>O76003</id>
        <label>GLRX3</label>
    </interactant>
    <organismsDiffer>false</organismsDiffer>
    <experiments>5</experiments>
</comment>
<comment type="alternative products">
    <event type="alternative splicing"/>
    <isoform>
        <id>Q8NEP7-1</id>
        <name>1</name>
        <sequence type="displayed"/>
    </isoform>
    <isoform>
        <id>Q8NEP7-2</id>
        <name>2</name>
        <sequence type="described" ref="VSP_027808 VSP_027810"/>
    </isoform>
    <isoform>
        <id>Q8NEP7-3</id>
        <name>3</name>
        <sequence type="described" ref="VSP_027807 VSP_027809"/>
    </isoform>
</comment>
<sequence>MAVAVPPGRAAGSGWAWRPVARDALLARAFHSCTELRGRFYLVGGLLAGGAREPSSDTVVFDPARGQAVRLGARGSPPRSHHDAAPVDGRWLCVVGGWDGSRRLATVTALDTERGVWEAWTGTPGDCPPAGLSSHTCTRISDRELQVAGREGGIHTQRRYGSIYTLRLDPSARTYCYKQEGCHTASRSGHCAALLQTPGPHPGHQLLLFGGCNLAEPEVAGHWSHGKIKEEPPVAPHLMEQLARLVSSGQGSQKGPHGLRHHSCSVVGPFAVLFGGETLTRARDTICNDLYIYDTRTSPPLWFHFPCADRGMKRMGHRTCLWNDQLYLVGGFGEDGRTASPQVCILDFI</sequence>
<proteinExistence type="evidence at protein level"/>
<organism>
    <name type="scientific">Homo sapiens</name>
    <name type="common">Human</name>
    <dbReference type="NCBI Taxonomy" id="9606"/>
    <lineage>
        <taxon>Eukaryota</taxon>
        <taxon>Metazoa</taxon>
        <taxon>Chordata</taxon>
        <taxon>Craniata</taxon>
        <taxon>Vertebrata</taxon>
        <taxon>Euteleostomi</taxon>
        <taxon>Mammalia</taxon>
        <taxon>Eutheria</taxon>
        <taxon>Euarchontoglires</taxon>
        <taxon>Primates</taxon>
        <taxon>Haplorrhini</taxon>
        <taxon>Catarrhini</taxon>
        <taxon>Hominidae</taxon>
        <taxon>Homo</taxon>
    </lineage>
</organism>
<protein>
    <recommendedName>
        <fullName>Kelch domain-containing protein 9</fullName>
    </recommendedName>
    <alternativeName>
        <fullName>Kelch/ankyrin repeat-containing cyclin A1-interacting protein</fullName>
    </alternativeName>
</protein>